<geneLocation type="chloroplast"/>
<evidence type="ECO:0000255" key="1">
    <source>
        <dbReference type="HAMAP-Rule" id="MF_01346"/>
    </source>
</evidence>
<feature type="chain" id="PRO_0000238417" description="ATP synthase subunit alpha, chloroplastic">
    <location>
        <begin position="1"/>
        <end position="512"/>
    </location>
</feature>
<feature type="binding site" evidence="1">
    <location>
        <begin position="170"/>
        <end position="177"/>
    </location>
    <ligand>
        <name>ATP</name>
        <dbReference type="ChEBI" id="CHEBI:30616"/>
    </ligand>
</feature>
<feature type="site" description="Required for activity" evidence="1">
    <location>
        <position position="363"/>
    </location>
</feature>
<proteinExistence type="inferred from homology"/>
<name>ATPA_CHAGL</name>
<comment type="function">
    <text evidence="1">Produces ATP from ADP in the presence of a proton gradient across the membrane. The alpha chain is a regulatory subunit.</text>
</comment>
<comment type="catalytic activity">
    <reaction evidence="1">
        <text>ATP + H2O + 4 H(+)(in) = ADP + phosphate + 5 H(+)(out)</text>
        <dbReference type="Rhea" id="RHEA:57720"/>
        <dbReference type="ChEBI" id="CHEBI:15377"/>
        <dbReference type="ChEBI" id="CHEBI:15378"/>
        <dbReference type="ChEBI" id="CHEBI:30616"/>
        <dbReference type="ChEBI" id="CHEBI:43474"/>
        <dbReference type="ChEBI" id="CHEBI:456216"/>
        <dbReference type="EC" id="7.1.2.2"/>
    </reaction>
</comment>
<comment type="subunit">
    <text evidence="1">F-type ATPases have 2 components, CF(1) - the catalytic core - and CF(0) - the membrane proton channel. CF(1) has five subunits: alpha(3), beta(3), gamma(1), delta(1), epsilon(1). CF(0) has four main subunits: a, b, b' and c.</text>
</comment>
<comment type="subcellular location">
    <subcellularLocation>
        <location evidence="1">Plastid</location>
        <location evidence="1">Chloroplast thylakoid membrane</location>
        <topology evidence="1">Peripheral membrane protein</topology>
    </subcellularLocation>
</comment>
<comment type="similarity">
    <text evidence="1">Belongs to the ATPase alpha/beta chains family.</text>
</comment>
<organism>
    <name type="scientific">Chaetosphaeridium globosum</name>
    <name type="common">Charophycean green alga</name>
    <name type="synonym">Herposteiron globosum</name>
    <dbReference type="NCBI Taxonomy" id="96477"/>
    <lineage>
        <taxon>Eukaryota</taxon>
        <taxon>Viridiplantae</taxon>
        <taxon>Streptophyta</taxon>
        <taxon>Coleochaetophyceae</taxon>
        <taxon>Coleochaetales</taxon>
        <taxon>Chaetosphaeridiaceae</taxon>
        <taxon>Chaetosphaeridium</taxon>
    </lineage>
</organism>
<keyword id="KW-0066">ATP synthesis</keyword>
<keyword id="KW-0067">ATP-binding</keyword>
<keyword id="KW-0139">CF(1)</keyword>
<keyword id="KW-0150">Chloroplast</keyword>
<keyword id="KW-0375">Hydrogen ion transport</keyword>
<keyword id="KW-0406">Ion transport</keyword>
<keyword id="KW-0472">Membrane</keyword>
<keyword id="KW-0547">Nucleotide-binding</keyword>
<keyword id="KW-0934">Plastid</keyword>
<keyword id="KW-0793">Thylakoid</keyword>
<keyword id="KW-1278">Translocase</keyword>
<keyword id="KW-0813">Transport</keyword>
<sequence length="512" mass="55822">MVNIRPEEISSIIRKQIEQYNQEVRVINIGTVLQVGDGIARIYGLDKVMSGELLEFEDGTIGIALNLESDNVGAVLMGEGLSIQEGSSVKATGKIAQIPVSDGYLGRVVNALARPIDGKGDIPASEFRLIESAAPGIISRRSVYEPMQTGLIAIDAMIPIGRGQRELIIGDRQTGKTAVATDTILNQKGNNVICVYVAIGQKASSVAQVLNTFEERGAMDYTIIVSEPANSPATLQYLAPYTGAALAEFFMYKGRHTLVIYDDLSKQAQAYRQMSLLLRRPPGREAYPGDVFYLHSRLLERAAKLNSQLGEGSMTALPIVETQAGDVSAYIPTNVISITDGQIFLSADLFNSGIRPAINVGISVSRVGSAAQIKAMKQVAGKLKLELAQFAELEAFSQFASDLDKATQNQLARGQRLRELLKQSQSSPLAVEDQVATIYTGVNGYLDILSVGQVRRFLVQLREYIASNKSEFTEIVKSTKTFTDKAEKILKEALQEYTELFLAQEELEKTKS</sequence>
<reference key="1">
    <citation type="journal article" date="2002" name="Proc. Natl. Acad. Sci. U.S.A.">
        <title>The chloroplast and mitochondrial genome sequences of the charophyte Chaetosphaeridium globosum: insights into the timing of the events that restructured organelle DNAs within the green algal lineage that led to land plants.</title>
        <authorList>
            <person name="Turmel M."/>
            <person name="Otis C."/>
            <person name="Lemieux C."/>
        </authorList>
    </citation>
    <scope>NUCLEOTIDE SEQUENCE [LARGE SCALE GENOMIC DNA]</scope>
    <source>
        <strain>M1311</strain>
    </source>
</reference>
<accession>Q8MA05</accession>
<dbReference type="EC" id="7.1.2.2" evidence="1"/>
<dbReference type="EMBL" id="AF494278">
    <property type="protein sequence ID" value="AAM96499.1"/>
    <property type="molecule type" value="Genomic_DNA"/>
</dbReference>
<dbReference type="RefSeq" id="NP_683781.1">
    <property type="nucleotide sequence ID" value="NC_004115.1"/>
</dbReference>
<dbReference type="SMR" id="Q8MA05"/>
<dbReference type="GeneID" id="860675"/>
<dbReference type="GO" id="GO:0009535">
    <property type="term" value="C:chloroplast thylakoid membrane"/>
    <property type="evidence" value="ECO:0007669"/>
    <property type="project" value="UniProtKB-SubCell"/>
</dbReference>
<dbReference type="GO" id="GO:0045259">
    <property type="term" value="C:proton-transporting ATP synthase complex"/>
    <property type="evidence" value="ECO:0007669"/>
    <property type="project" value="UniProtKB-KW"/>
</dbReference>
<dbReference type="GO" id="GO:0043531">
    <property type="term" value="F:ADP binding"/>
    <property type="evidence" value="ECO:0007669"/>
    <property type="project" value="TreeGrafter"/>
</dbReference>
<dbReference type="GO" id="GO:0005524">
    <property type="term" value="F:ATP binding"/>
    <property type="evidence" value="ECO:0007669"/>
    <property type="project" value="UniProtKB-UniRule"/>
</dbReference>
<dbReference type="GO" id="GO:0046933">
    <property type="term" value="F:proton-transporting ATP synthase activity, rotational mechanism"/>
    <property type="evidence" value="ECO:0007669"/>
    <property type="project" value="UniProtKB-UniRule"/>
</dbReference>
<dbReference type="CDD" id="cd18113">
    <property type="entry name" value="ATP-synt_F1_alpha_C"/>
    <property type="match status" value="1"/>
</dbReference>
<dbReference type="CDD" id="cd18116">
    <property type="entry name" value="ATP-synt_F1_alpha_N"/>
    <property type="match status" value="1"/>
</dbReference>
<dbReference type="CDD" id="cd01132">
    <property type="entry name" value="F1-ATPase_alpha_CD"/>
    <property type="match status" value="1"/>
</dbReference>
<dbReference type="FunFam" id="1.20.150.20:FF:000001">
    <property type="entry name" value="ATP synthase subunit alpha"/>
    <property type="match status" value="1"/>
</dbReference>
<dbReference type="FunFam" id="2.40.30.20:FF:000001">
    <property type="entry name" value="ATP synthase subunit alpha"/>
    <property type="match status" value="1"/>
</dbReference>
<dbReference type="FunFam" id="3.40.50.300:FF:000002">
    <property type="entry name" value="ATP synthase subunit alpha"/>
    <property type="match status" value="1"/>
</dbReference>
<dbReference type="Gene3D" id="2.40.30.20">
    <property type="match status" value="1"/>
</dbReference>
<dbReference type="Gene3D" id="1.20.150.20">
    <property type="entry name" value="ATP synthase alpha/beta chain, C-terminal domain"/>
    <property type="match status" value="1"/>
</dbReference>
<dbReference type="Gene3D" id="3.40.50.300">
    <property type="entry name" value="P-loop containing nucleotide triphosphate hydrolases"/>
    <property type="match status" value="1"/>
</dbReference>
<dbReference type="HAMAP" id="MF_01346">
    <property type="entry name" value="ATP_synth_alpha_bact"/>
    <property type="match status" value="1"/>
</dbReference>
<dbReference type="InterPro" id="IPR023366">
    <property type="entry name" value="ATP_synth_asu-like_sf"/>
</dbReference>
<dbReference type="InterPro" id="IPR000793">
    <property type="entry name" value="ATP_synth_asu_C"/>
</dbReference>
<dbReference type="InterPro" id="IPR038376">
    <property type="entry name" value="ATP_synth_asu_C_sf"/>
</dbReference>
<dbReference type="InterPro" id="IPR033732">
    <property type="entry name" value="ATP_synth_F1_a_nt-bd_dom"/>
</dbReference>
<dbReference type="InterPro" id="IPR005294">
    <property type="entry name" value="ATP_synth_F1_asu"/>
</dbReference>
<dbReference type="InterPro" id="IPR020003">
    <property type="entry name" value="ATPase_a/bsu_AS"/>
</dbReference>
<dbReference type="InterPro" id="IPR004100">
    <property type="entry name" value="ATPase_F1/V1/A1_a/bsu_N"/>
</dbReference>
<dbReference type="InterPro" id="IPR036121">
    <property type="entry name" value="ATPase_F1/V1/A1_a/bsu_N_sf"/>
</dbReference>
<dbReference type="InterPro" id="IPR000194">
    <property type="entry name" value="ATPase_F1/V1/A1_a/bsu_nucl-bd"/>
</dbReference>
<dbReference type="InterPro" id="IPR027417">
    <property type="entry name" value="P-loop_NTPase"/>
</dbReference>
<dbReference type="NCBIfam" id="TIGR00962">
    <property type="entry name" value="atpA"/>
    <property type="match status" value="1"/>
</dbReference>
<dbReference type="NCBIfam" id="NF009884">
    <property type="entry name" value="PRK13343.1"/>
    <property type="match status" value="1"/>
</dbReference>
<dbReference type="PANTHER" id="PTHR48082">
    <property type="entry name" value="ATP SYNTHASE SUBUNIT ALPHA, MITOCHONDRIAL"/>
    <property type="match status" value="1"/>
</dbReference>
<dbReference type="PANTHER" id="PTHR48082:SF2">
    <property type="entry name" value="ATP SYNTHASE SUBUNIT ALPHA, MITOCHONDRIAL"/>
    <property type="match status" value="1"/>
</dbReference>
<dbReference type="Pfam" id="PF00006">
    <property type="entry name" value="ATP-synt_ab"/>
    <property type="match status" value="1"/>
</dbReference>
<dbReference type="Pfam" id="PF00306">
    <property type="entry name" value="ATP-synt_ab_C"/>
    <property type="match status" value="1"/>
</dbReference>
<dbReference type="Pfam" id="PF02874">
    <property type="entry name" value="ATP-synt_ab_N"/>
    <property type="match status" value="1"/>
</dbReference>
<dbReference type="PIRSF" id="PIRSF039088">
    <property type="entry name" value="F_ATPase_subunit_alpha"/>
    <property type="match status" value="1"/>
</dbReference>
<dbReference type="SUPFAM" id="SSF47917">
    <property type="entry name" value="C-terminal domain of alpha and beta subunits of F1 ATP synthase"/>
    <property type="match status" value="1"/>
</dbReference>
<dbReference type="SUPFAM" id="SSF50615">
    <property type="entry name" value="N-terminal domain of alpha and beta subunits of F1 ATP synthase"/>
    <property type="match status" value="1"/>
</dbReference>
<dbReference type="SUPFAM" id="SSF52540">
    <property type="entry name" value="P-loop containing nucleoside triphosphate hydrolases"/>
    <property type="match status" value="1"/>
</dbReference>
<dbReference type="PROSITE" id="PS00152">
    <property type="entry name" value="ATPASE_ALPHA_BETA"/>
    <property type="match status" value="1"/>
</dbReference>
<gene>
    <name evidence="1" type="primary">atpA</name>
</gene>
<protein>
    <recommendedName>
        <fullName evidence="1">ATP synthase subunit alpha, chloroplastic</fullName>
        <ecNumber evidence="1">7.1.2.2</ecNumber>
    </recommendedName>
    <alternativeName>
        <fullName evidence="1">ATP synthase F1 sector subunit alpha</fullName>
    </alternativeName>
    <alternativeName>
        <fullName evidence="1">F-ATPase subunit alpha</fullName>
    </alternativeName>
</protein>